<accession>Q9C1W6</accession>
<name>YN59_SCHPO</name>
<evidence type="ECO:0000255" key="1"/>
<evidence type="ECO:0000256" key="2">
    <source>
        <dbReference type="SAM" id="MobiDB-lite"/>
    </source>
</evidence>
<evidence type="ECO:0000269" key="3">
    <source>
    </source>
</evidence>
<comment type="subcellular location">
    <subcellularLocation>
        <location evidence="3">Cytoplasm</location>
    </subcellularLocation>
</comment>
<proteinExistence type="predicted"/>
<feature type="chain" id="PRO_0000304009" description="Uncharacterized protein C713.09">
    <location>
        <begin position="1"/>
        <end position="395"/>
    </location>
</feature>
<feature type="region of interest" description="Disordered" evidence="2">
    <location>
        <begin position="17"/>
        <end position="155"/>
    </location>
</feature>
<feature type="region of interest" description="Disordered" evidence="2">
    <location>
        <begin position="276"/>
        <end position="304"/>
    </location>
</feature>
<feature type="coiled-coil region" evidence="1">
    <location>
        <begin position="224"/>
        <end position="351"/>
    </location>
</feature>
<feature type="compositionally biased region" description="Polar residues" evidence="2">
    <location>
        <begin position="42"/>
        <end position="71"/>
    </location>
</feature>
<feature type="compositionally biased region" description="Polar residues" evidence="2">
    <location>
        <begin position="81"/>
        <end position="96"/>
    </location>
</feature>
<feature type="compositionally biased region" description="Basic and acidic residues" evidence="2">
    <location>
        <begin position="103"/>
        <end position="133"/>
    </location>
</feature>
<feature type="compositionally biased region" description="Low complexity" evidence="2">
    <location>
        <begin position="134"/>
        <end position="143"/>
    </location>
</feature>
<feature type="compositionally biased region" description="Basic and acidic residues" evidence="2">
    <location>
        <begin position="144"/>
        <end position="155"/>
    </location>
</feature>
<feature type="compositionally biased region" description="Basic and acidic residues" evidence="2">
    <location>
        <begin position="276"/>
        <end position="290"/>
    </location>
</feature>
<feature type="compositionally biased region" description="Polar residues" evidence="2">
    <location>
        <begin position="291"/>
        <end position="300"/>
    </location>
</feature>
<protein>
    <recommendedName>
        <fullName>Uncharacterized protein C713.09</fullName>
    </recommendedName>
</protein>
<reference key="1">
    <citation type="journal article" date="2002" name="Nature">
        <title>The genome sequence of Schizosaccharomyces pombe.</title>
        <authorList>
            <person name="Wood V."/>
            <person name="Gwilliam R."/>
            <person name="Rajandream M.A."/>
            <person name="Lyne M.H."/>
            <person name="Lyne R."/>
            <person name="Stewart A."/>
            <person name="Sgouros J.G."/>
            <person name="Peat N."/>
            <person name="Hayles J."/>
            <person name="Baker S.G."/>
            <person name="Basham D."/>
            <person name="Bowman S."/>
            <person name="Brooks K."/>
            <person name="Brown D."/>
            <person name="Brown S."/>
            <person name="Chillingworth T."/>
            <person name="Churcher C.M."/>
            <person name="Collins M."/>
            <person name="Connor R."/>
            <person name="Cronin A."/>
            <person name="Davis P."/>
            <person name="Feltwell T."/>
            <person name="Fraser A."/>
            <person name="Gentles S."/>
            <person name="Goble A."/>
            <person name="Hamlin N."/>
            <person name="Harris D.E."/>
            <person name="Hidalgo J."/>
            <person name="Hodgson G."/>
            <person name="Holroyd S."/>
            <person name="Hornsby T."/>
            <person name="Howarth S."/>
            <person name="Huckle E.J."/>
            <person name="Hunt S."/>
            <person name="Jagels K."/>
            <person name="James K.D."/>
            <person name="Jones L."/>
            <person name="Jones M."/>
            <person name="Leather S."/>
            <person name="McDonald S."/>
            <person name="McLean J."/>
            <person name="Mooney P."/>
            <person name="Moule S."/>
            <person name="Mungall K.L."/>
            <person name="Murphy L.D."/>
            <person name="Niblett D."/>
            <person name="Odell C."/>
            <person name="Oliver K."/>
            <person name="O'Neil S."/>
            <person name="Pearson D."/>
            <person name="Quail M.A."/>
            <person name="Rabbinowitsch E."/>
            <person name="Rutherford K.M."/>
            <person name="Rutter S."/>
            <person name="Saunders D."/>
            <person name="Seeger K."/>
            <person name="Sharp S."/>
            <person name="Skelton J."/>
            <person name="Simmonds M.N."/>
            <person name="Squares R."/>
            <person name="Squares S."/>
            <person name="Stevens K."/>
            <person name="Taylor K."/>
            <person name="Taylor R.G."/>
            <person name="Tivey A."/>
            <person name="Walsh S.V."/>
            <person name="Warren T."/>
            <person name="Whitehead S."/>
            <person name="Woodward J.R."/>
            <person name="Volckaert G."/>
            <person name="Aert R."/>
            <person name="Robben J."/>
            <person name="Grymonprez B."/>
            <person name="Weltjens I."/>
            <person name="Vanstreels E."/>
            <person name="Rieger M."/>
            <person name="Schaefer M."/>
            <person name="Mueller-Auer S."/>
            <person name="Gabel C."/>
            <person name="Fuchs M."/>
            <person name="Duesterhoeft A."/>
            <person name="Fritzc C."/>
            <person name="Holzer E."/>
            <person name="Moestl D."/>
            <person name="Hilbert H."/>
            <person name="Borzym K."/>
            <person name="Langer I."/>
            <person name="Beck A."/>
            <person name="Lehrach H."/>
            <person name="Reinhardt R."/>
            <person name="Pohl T.M."/>
            <person name="Eger P."/>
            <person name="Zimmermann W."/>
            <person name="Wedler H."/>
            <person name="Wambutt R."/>
            <person name="Purnelle B."/>
            <person name="Goffeau A."/>
            <person name="Cadieu E."/>
            <person name="Dreano S."/>
            <person name="Gloux S."/>
            <person name="Lelaure V."/>
            <person name="Mottier S."/>
            <person name="Galibert F."/>
            <person name="Aves S.J."/>
            <person name="Xiang Z."/>
            <person name="Hunt C."/>
            <person name="Moore K."/>
            <person name="Hurst S.M."/>
            <person name="Lucas M."/>
            <person name="Rochet M."/>
            <person name="Gaillardin C."/>
            <person name="Tallada V.A."/>
            <person name="Garzon A."/>
            <person name="Thode G."/>
            <person name="Daga R.R."/>
            <person name="Cruzado L."/>
            <person name="Jimenez J."/>
            <person name="Sanchez M."/>
            <person name="del Rey F."/>
            <person name="Benito J."/>
            <person name="Dominguez A."/>
            <person name="Revuelta J.L."/>
            <person name="Moreno S."/>
            <person name="Armstrong J."/>
            <person name="Forsburg S.L."/>
            <person name="Cerutti L."/>
            <person name="Lowe T."/>
            <person name="McCombie W.R."/>
            <person name="Paulsen I."/>
            <person name="Potashkin J."/>
            <person name="Shpakovski G.V."/>
            <person name="Ussery D."/>
            <person name="Barrell B.G."/>
            <person name="Nurse P."/>
        </authorList>
    </citation>
    <scope>NUCLEOTIDE SEQUENCE [LARGE SCALE GENOMIC DNA]</scope>
    <source>
        <strain>972 / ATCC 24843</strain>
    </source>
</reference>
<reference key="2">
    <citation type="journal article" date="2006" name="Nat. Biotechnol.">
        <title>ORFeome cloning and global analysis of protein localization in the fission yeast Schizosaccharomyces pombe.</title>
        <authorList>
            <person name="Matsuyama A."/>
            <person name="Arai R."/>
            <person name="Yashiroda Y."/>
            <person name="Shirai A."/>
            <person name="Kamata A."/>
            <person name="Sekido S."/>
            <person name="Kobayashi Y."/>
            <person name="Hashimoto A."/>
            <person name="Hamamoto M."/>
            <person name="Hiraoka Y."/>
            <person name="Horinouchi S."/>
            <person name="Yoshida M."/>
        </authorList>
    </citation>
    <scope>SUBCELLULAR LOCATION [LARGE SCALE ANALYSIS]</scope>
</reference>
<keyword id="KW-0175">Coiled coil</keyword>
<keyword id="KW-0963">Cytoplasm</keyword>
<keyword id="KW-1185">Reference proteome</keyword>
<dbReference type="EMBL" id="CU329671">
    <property type="protein sequence ID" value="CAC22610.1"/>
    <property type="molecule type" value="Genomic_DNA"/>
</dbReference>
<dbReference type="RefSeq" id="NP_595348.1">
    <property type="nucleotide sequence ID" value="NM_001021256.2"/>
</dbReference>
<dbReference type="SMR" id="Q9C1W6"/>
<dbReference type="BioGRID" id="277276">
    <property type="interactions" value="3"/>
</dbReference>
<dbReference type="STRING" id="284812.Q9C1W6"/>
<dbReference type="iPTMnet" id="Q9C1W6"/>
<dbReference type="PaxDb" id="4896-SPBC713.09.1"/>
<dbReference type="EnsemblFungi" id="SPBC713.09.1">
    <property type="protein sequence ID" value="SPBC713.09.1:pep"/>
    <property type="gene ID" value="SPBC713.09"/>
</dbReference>
<dbReference type="KEGG" id="spo:2540755"/>
<dbReference type="PomBase" id="SPBC713.09"/>
<dbReference type="VEuPathDB" id="FungiDB:SPBC713.09"/>
<dbReference type="HOGENOM" id="CLU_698601_0_0_1"/>
<dbReference type="InParanoid" id="Q9C1W6"/>
<dbReference type="OMA" id="ETRMPET"/>
<dbReference type="PhylomeDB" id="Q9C1W6"/>
<dbReference type="PRO" id="PR:Q9C1W6"/>
<dbReference type="Proteomes" id="UP000002485">
    <property type="component" value="Chromosome II"/>
</dbReference>
<dbReference type="GO" id="GO:0005737">
    <property type="term" value="C:cytoplasm"/>
    <property type="evidence" value="ECO:0007005"/>
    <property type="project" value="PomBase"/>
</dbReference>
<dbReference type="GO" id="GO:0005829">
    <property type="term" value="C:cytosol"/>
    <property type="evidence" value="ECO:0007005"/>
    <property type="project" value="PomBase"/>
</dbReference>
<sequence length="395" mass="44770">MSDREEKLAAAKQRLLEVKKKKRQAKSKNSVAEDNVDRESNDGNNQVNEPTGNDNTQVVENTEDISASNVVSAEGAEASTGDASTQSPETSENVVKNSVDESVAEKPEKEDLAVIESEDKAAKPDGEIKKNVETEVTSRSTSSQEKDELEKQVKTLHDLNEQKDKKIKELKERINDLTYDYETLKANADDSEGKQTLVSKREAALEEFQSKLLIRENEINKRELKMNGKEDDLKKREKDLENRLLKVEEHEKSLNERATKLSEANENFNNRFKEFEEREKSAIKQNKEQSSEGSKTANQTHEQKELINSLEKKVSDIALEKQLLEEAVERYKLAMVEFAECQRRLKELEAMHFEQPGSVTEKLFPDPTNFEVIDNVSIDLTLTGFPGAHGIPFSV</sequence>
<organism>
    <name type="scientific">Schizosaccharomyces pombe (strain 972 / ATCC 24843)</name>
    <name type="common">Fission yeast</name>
    <dbReference type="NCBI Taxonomy" id="284812"/>
    <lineage>
        <taxon>Eukaryota</taxon>
        <taxon>Fungi</taxon>
        <taxon>Dikarya</taxon>
        <taxon>Ascomycota</taxon>
        <taxon>Taphrinomycotina</taxon>
        <taxon>Schizosaccharomycetes</taxon>
        <taxon>Schizosaccharomycetales</taxon>
        <taxon>Schizosaccharomycetaceae</taxon>
        <taxon>Schizosaccharomyces</taxon>
    </lineage>
</organism>
<gene>
    <name type="ORF">SPBC713.09</name>
</gene>